<keyword id="KW-0687">Ribonucleoprotein</keyword>
<keyword id="KW-0689">Ribosomal protein</keyword>
<keyword id="KW-0694">RNA-binding</keyword>
<keyword id="KW-0699">rRNA-binding</keyword>
<proteinExistence type="inferred from homology"/>
<organism>
    <name type="scientific">Xanthomonas oryzae pv. oryzae (strain PXO99A)</name>
    <dbReference type="NCBI Taxonomy" id="360094"/>
    <lineage>
        <taxon>Bacteria</taxon>
        <taxon>Pseudomonadati</taxon>
        <taxon>Pseudomonadota</taxon>
        <taxon>Gammaproteobacteria</taxon>
        <taxon>Lysobacterales</taxon>
        <taxon>Lysobacteraceae</taxon>
        <taxon>Xanthomonas</taxon>
    </lineage>
</organism>
<accession>B2SQR4</accession>
<name>RS19_XANOP</name>
<gene>
    <name evidence="1" type="primary">rpsS</name>
    <name type="ordered locus">PXO_04517</name>
</gene>
<comment type="function">
    <text evidence="1">Protein S19 forms a complex with S13 that binds strongly to the 16S ribosomal RNA.</text>
</comment>
<comment type="similarity">
    <text evidence="1">Belongs to the universal ribosomal protein uS19 family.</text>
</comment>
<protein>
    <recommendedName>
        <fullName evidence="1">Small ribosomal subunit protein uS19</fullName>
    </recommendedName>
    <alternativeName>
        <fullName evidence="2">30S ribosomal protein S19</fullName>
    </alternativeName>
</protein>
<sequence length="89" mass="9782">MARSLKKGPFVDHHLAKKVESAAGSKKPIKTWSRRSMILPEMVGITIAVHNGKNHIPVLVNENMVGHKLGEFAVTRTFKGHGGDKKSSR</sequence>
<evidence type="ECO:0000255" key="1">
    <source>
        <dbReference type="HAMAP-Rule" id="MF_00531"/>
    </source>
</evidence>
<evidence type="ECO:0000305" key="2"/>
<reference key="1">
    <citation type="journal article" date="2008" name="BMC Genomics">
        <title>Genome sequence and rapid evolution of the rice pathogen Xanthomonas oryzae pv. oryzae PXO99A.</title>
        <authorList>
            <person name="Salzberg S.L."/>
            <person name="Sommer D.D."/>
            <person name="Schatz M.C."/>
            <person name="Phillippy A.M."/>
            <person name="Rabinowicz P.D."/>
            <person name="Tsuge S."/>
            <person name="Furutani A."/>
            <person name="Ochiai H."/>
            <person name="Delcher A.L."/>
            <person name="Kelley D."/>
            <person name="Madupu R."/>
            <person name="Puiu D."/>
            <person name="Radune D."/>
            <person name="Shumway M."/>
            <person name="Trapnell C."/>
            <person name="Aparna G."/>
            <person name="Jha G."/>
            <person name="Pandey A."/>
            <person name="Patil P.B."/>
            <person name="Ishihara H."/>
            <person name="Meyer D.F."/>
            <person name="Szurek B."/>
            <person name="Verdier V."/>
            <person name="Koebnik R."/>
            <person name="Dow J.M."/>
            <person name="Ryan R.P."/>
            <person name="Hirata H."/>
            <person name="Tsuyumu S."/>
            <person name="Won Lee S."/>
            <person name="Seo Y.-S."/>
            <person name="Sriariyanum M."/>
            <person name="Ronald P.C."/>
            <person name="Sonti R.V."/>
            <person name="Van Sluys M.-A."/>
            <person name="Leach J.E."/>
            <person name="White F.F."/>
            <person name="Bogdanove A.J."/>
        </authorList>
    </citation>
    <scope>NUCLEOTIDE SEQUENCE [LARGE SCALE GENOMIC DNA]</scope>
    <source>
        <strain>PXO99A</strain>
    </source>
</reference>
<feature type="chain" id="PRO_1000128059" description="Small ribosomal subunit protein uS19">
    <location>
        <begin position="1"/>
        <end position="89"/>
    </location>
</feature>
<dbReference type="EMBL" id="CP000967">
    <property type="protein sequence ID" value="ACD57891.1"/>
    <property type="molecule type" value="Genomic_DNA"/>
</dbReference>
<dbReference type="RefSeq" id="WP_005993369.1">
    <property type="nucleotide sequence ID" value="NC_010717.2"/>
</dbReference>
<dbReference type="SMR" id="B2SQR4"/>
<dbReference type="GeneID" id="97210508"/>
<dbReference type="KEGG" id="xop:PXO_04517"/>
<dbReference type="eggNOG" id="COG0185">
    <property type="taxonomic scope" value="Bacteria"/>
</dbReference>
<dbReference type="HOGENOM" id="CLU_144911_0_1_6"/>
<dbReference type="Proteomes" id="UP000001740">
    <property type="component" value="Chromosome"/>
</dbReference>
<dbReference type="GO" id="GO:0005737">
    <property type="term" value="C:cytoplasm"/>
    <property type="evidence" value="ECO:0007669"/>
    <property type="project" value="UniProtKB-ARBA"/>
</dbReference>
<dbReference type="GO" id="GO:0015935">
    <property type="term" value="C:small ribosomal subunit"/>
    <property type="evidence" value="ECO:0007669"/>
    <property type="project" value="InterPro"/>
</dbReference>
<dbReference type="GO" id="GO:0019843">
    <property type="term" value="F:rRNA binding"/>
    <property type="evidence" value="ECO:0007669"/>
    <property type="project" value="UniProtKB-UniRule"/>
</dbReference>
<dbReference type="GO" id="GO:0003735">
    <property type="term" value="F:structural constituent of ribosome"/>
    <property type="evidence" value="ECO:0007669"/>
    <property type="project" value="InterPro"/>
</dbReference>
<dbReference type="GO" id="GO:0000028">
    <property type="term" value="P:ribosomal small subunit assembly"/>
    <property type="evidence" value="ECO:0007669"/>
    <property type="project" value="TreeGrafter"/>
</dbReference>
<dbReference type="GO" id="GO:0006412">
    <property type="term" value="P:translation"/>
    <property type="evidence" value="ECO:0007669"/>
    <property type="project" value="UniProtKB-UniRule"/>
</dbReference>
<dbReference type="FunFam" id="3.30.860.10:FF:000001">
    <property type="entry name" value="30S ribosomal protein S19"/>
    <property type="match status" value="1"/>
</dbReference>
<dbReference type="Gene3D" id="3.30.860.10">
    <property type="entry name" value="30s Ribosomal Protein S19, Chain A"/>
    <property type="match status" value="1"/>
</dbReference>
<dbReference type="HAMAP" id="MF_00531">
    <property type="entry name" value="Ribosomal_uS19"/>
    <property type="match status" value="1"/>
</dbReference>
<dbReference type="InterPro" id="IPR002222">
    <property type="entry name" value="Ribosomal_uS19"/>
</dbReference>
<dbReference type="InterPro" id="IPR005732">
    <property type="entry name" value="Ribosomal_uS19_bac-type"/>
</dbReference>
<dbReference type="InterPro" id="IPR020934">
    <property type="entry name" value="Ribosomal_uS19_CS"/>
</dbReference>
<dbReference type="InterPro" id="IPR023575">
    <property type="entry name" value="Ribosomal_uS19_SF"/>
</dbReference>
<dbReference type="NCBIfam" id="TIGR01050">
    <property type="entry name" value="rpsS_bact"/>
    <property type="match status" value="1"/>
</dbReference>
<dbReference type="PANTHER" id="PTHR11880">
    <property type="entry name" value="RIBOSOMAL PROTEIN S19P FAMILY MEMBER"/>
    <property type="match status" value="1"/>
</dbReference>
<dbReference type="PANTHER" id="PTHR11880:SF8">
    <property type="entry name" value="SMALL RIBOSOMAL SUBUNIT PROTEIN US19M"/>
    <property type="match status" value="1"/>
</dbReference>
<dbReference type="Pfam" id="PF00203">
    <property type="entry name" value="Ribosomal_S19"/>
    <property type="match status" value="1"/>
</dbReference>
<dbReference type="PIRSF" id="PIRSF002144">
    <property type="entry name" value="Ribosomal_S19"/>
    <property type="match status" value="1"/>
</dbReference>
<dbReference type="PRINTS" id="PR00975">
    <property type="entry name" value="RIBOSOMALS19"/>
</dbReference>
<dbReference type="SUPFAM" id="SSF54570">
    <property type="entry name" value="Ribosomal protein S19"/>
    <property type="match status" value="1"/>
</dbReference>
<dbReference type="PROSITE" id="PS00323">
    <property type="entry name" value="RIBOSOMAL_S19"/>
    <property type="match status" value="1"/>
</dbReference>